<organism>
    <name type="scientific">Lacticaseibacillus paracasei (strain ATCC 334 / BCRC 17002 / CCUG 31169 / CIP 107868 / KCTC 3260 / NRRL B-441)</name>
    <name type="common">Lactobacillus paracasei</name>
    <dbReference type="NCBI Taxonomy" id="321967"/>
    <lineage>
        <taxon>Bacteria</taxon>
        <taxon>Bacillati</taxon>
        <taxon>Bacillota</taxon>
        <taxon>Bacilli</taxon>
        <taxon>Lactobacillales</taxon>
        <taxon>Lactobacillaceae</taxon>
        <taxon>Lacticaseibacillus</taxon>
    </lineage>
</organism>
<evidence type="ECO:0000255" key="1">
    <source>
        <dbReference type="HAMAP-Rule" id="MF_00016"/>
    </source>
</evidence>
<keyword id="KW-0067">ATP-binding</keyword>
<keyword id="KW-0963">Cytoplasm</keyword>
<keyword id="KW-0227">DNA damage</keyword>
<keyword id="KW-0233">DNA recombination</keyword>
<keyword id="KW-0234">DNA repair</keyword>
<keyword id="KW-0238">DNA-binding</keyword>
<keyword id="KW-0378">Hydrolase</keyword>
<keyword id="KW-0547">Nucleotide-binding</keyword>
<keyword id="KW-1185">Reference proteome</keyword>
<name>RUVB_LACP3</name>
<gene>
    <name evidence="1" type="primary">ruvB</name>
    <name type="ordered locus">LSEI_0769</name>
</gene>
<dbReference type="EC" id="3.6.4.-" evidence="1"/>
<dbReference type="EMBL" id="CP000423">
    <property type="protein sequence ID" value="ABJ69605.1"/>
    <property type="molecule type" value="Genomic_DNA"/>
</dbReference>
<dbReference type="RefSeq" id="WP_003583784.1">
    <property type="nucleotide sequence ID" value="NC_008526.1"/>
</dbReference>
<dbReference type="RefSeq" id="YP_806047.1">
    <property type="nucleotide sequence ID" value="NC_008526.1"/>
</dbReference>
<dbReference type="SMR" id="Q03B17"/>
<dbReference type="STRING" id="321967.LSEI_0769"/>
<dbReference type="PaxDb" id="321967-LSEI_0769"/>
<dbReference type="KEGG" id="lca:LSEI_0769"/>
<dbReference type="PATRIC" id="fig|321967.11.peg.771"/>
<dbReference type="HOGENOM" id="CLU_055599_1_0_9"/>
<dbReference type="Proteomes" id="UP000001651">
    <property type="component" value="Chromosome"/>
</dbReference>
<dbReference type="GO" id="GO:0005737">
    <property type="term" value="C:cytoplasm"/>
    <property type="evidence" value="ECO:0007669"/>
    <property type="project" value="UniProtKB-SubCell"/>
</dbReference>
<dbReference type="GO" id="GO:0048476">
    <property type="term" value="C:Holliday junction resolvase complex"/>
    <property type="evidence" value="ECO:0007669"/>
    <property type="project" value="UniProtKB-UniRule"/>
</dbReference>
<dbReference type="GO" id="GO:0005524">
    <property type="term" value="F:ATP binding"/>
    <property type="evidence" value="ECO:0007669"/>
    <property type="project" value="UniProtKB-UniRule"/>
</dbReference>
<dbReference type="GO" id="GO:0016887">
    <property type="term" value="F:ATP hydrolysis activity"/>
    <property type="evidence" value="ECO:0007669"/>
    <property type="project" value="InterPro"/>
</dbReference>
<dbReference type="GO" id="GO:0000400">
    <property type="term" value="F:four-way junction DNA binding"/>
    <property type="evidence" value="ECO:0007669"/>
    <property type="project" value="UniProtKB-UniRule"/>
</dbReference>
<dbReference type="GO" id="GO:0009378">
    <property type="term" value="F:four-way junction helicase activity"/>
    <property type="evidence" value="ECO:0007669"/>
    <property type="project" value="InterPro"/>
</dbReference>
<dbReference type="GO" id="GO:0006310">
    <property type="term" value="P:DNA recombination"/>
    <property type="evidence" value="ECO:0007669"/>
    <property type="project" value="UniProtKB-UniRule"/>
</dbReference>
<dbReference type="GO" id="GO:0006281">
    <property type="term" value="P:DNA repair"/>
    <property type="evidence" value="ECO:0007669"/>
    <property type="project" value="UniProtKB-UniRule"/>
</dbReference>
<dbReference type="CDD" id="cd00009">
    <property type="entry name" value="AAA"/>
    <property type="match status" value="1"/>
</dbReference>
<dbReference type="Gene3D" id="1.10.8.60">
    <property type="match status" value="1"/>
</dbReference>
<dbReference type="Gene3D" id="3.40.50.300">
    <property type="entry name" value="P-loop containing nucleotide triphosphate hydrolases"/>
    <property type="match status" value="1"/>
</dbReference>
<dbReference type="Gene3D" id="1.10.10.10">
    <property type="entry name" value="Winged helix-like DNA-binding domain superfamily/Winged helix DNA-binding domain"/>
    <property type="match status" value="1"/>
</dbReference>
<dbReference type="HAMAP" id="MF_00016">
    <property type="entry name" value="DNA_HJ_migration_RuvB"/>
    <property type="match status" value="1"/>
</dbReference>
<dbReference type="InterPro" id="IPR003593">
    <property type="entry name" value="AAA+_ATPase"/>
</dbReference>
<dbReference type="InterPro" id="IPR041445">
    <property type="entry name" value="AAA_lid_4"/>
</dbReference>
<dbReference type="InterPro" id="IPR004605">
    <property type="entry name" value="DNA_helicase_Holl-junc_RuvB"/>
</dbReference>
<dbReference type="InterPro" id="IPR027417">
    <property type="entry name" value="P-loop_NTPase"/>
</dbReference>
<dbReference type="InterPro" id="IPR008824">
    <property type="entry name" value="RuvB-like_N"/>
</dbReference>
<dbReference type="InterPro" id="IPR008823">
    <property type="entry name" value="RuvB_C"/>
</dbReference>
<dbReference type="InterPro" id="IPR036388">
    <property type="entry name" value="WH-like_DNA-bd_sf"/>
</dbReference>
<dbReference type="InterPro" id="IPR036390">
    <property type="entry name" value="WH_DNA-bd_sf"/>
</dbReference>
<dbReference type="NCBIfam" id="NF000868">
    <property type="entry name" value="PRK00080.1"/>
    <property type="match status" value="1"/>
</dbReference>
<dbReference type="NCBIfam" id="TIGR00635">
    <property type="entry name" value="ruvB"/>
    <property type="match status" value="1"/>
</dbReference>
<dbReference type="PANTHER" id="PTHR42848">
    <property type="match status" value="1"/>
</dbReference>
<dbReference type="PANTHER" id="PTHR42848:SF1">
    <property type="entry name" value="HOLLIDAY JUNCTION BRANCH MIGRATION COMPLEX SUBUNIT RUVB"/>
    <property type="match status" value="1"/>
</dbReference>
<dbReference type="Pfam" id="PF17864">
    <property type="entry name" value="AAA_lid_4"/>
    <property type="match status" value="1"/>
</dbReference>
<dbReference type="Pfam" id="PF05491">
    <property type="entry name" value="RuvB_C"/>
    <property type="match status" value="1"/>
</dbReference>
<dbReference type="Pfam" id="PF05496">
    <property type="entry name" value="RuvB_N"/>
    <property type="match status" value="1"/>
</dbReference>
<dbReference type="SMART" id="SM00382">
    <property type="entry name" value="AAA"/>
    <property type="match status" value="1"/>
</dbReference>
<dbReference type="SUPFAM" id="SSF52540">
    <property type="entry name" value="P-loop containing nucleoside triphosphate hydrolases"/>
    <property type="match status" value="1"/>
</dbReference>
<dbReference type="SUPFAM" id="SSF46785">
    <property type="entry name" value="Winged helix' DNA-binding domain"/>
    <property type="match status" value="1"/>
</dbReference>
<feature type="chain" id="PRO_0000322803" description="Holliday junction branch migration complex subunit RuvB">
    <location>
        <begin position="1"/>
        <end position="338"/>
    </location>
</feature>
<feature type="region of interest" description="Large ATPase domain (RuvB-L)" evidence="1">
    <location>
        <begin position="4"/>
        <end position="187"/>
    </location>
</feature>
<feature type="region of interest" description="Small ATPAse domain (RuvB-S)" evidence="1">
    <location>
        <begin position="188"/>
        <end position="258"/>
    </location>
</feature>
<feature type="region of interest" description="Head domain (RuvB-H)" evidence="1">
    <location>
        <begin position="261"/>
        <end position="338"/>
    </location>
</feature>
<feature type="binding site" evidence="1">
    <location>
        <position position="26"/>
    </location>
    <ligand>
        <name>ATP</name>
        <dbReference type="ChEBI" id="CHEBI:30616"/>
    </ligand>
</feature>
<feature type="binding site" evidence="1">
    <location>
        <position position="27"/>
    </location>
    <ligand>
        <name>ATP</name>
        <dbReference type="ChEBI" id="CHEBI:30616"/>
    </ligand>
</feature>
<feature type="binding site" evidence="1">
    <location>
        <position position="68"/>
    </location>
    <ligand>
        <name>ATP</name>
        <dbReference type="ChEBI" id="CHEBI:30616"/>
    </ligand>
</feature>
<feature type="binding site" evidence="1">
    <location>
        <position position="71"/>
    </location>
    <ligand>
        <name>ATP</name>
        <dbReference type="ChEBI" id="CHEBI:30616"/>
    </ligand>
</feature>
<feature type="binding site" evidence="1">
    <location>
        <position position="72"/>
    </location>
    <ligand>
        <name>ATP</name>
        <dbReference type="ChEBI" id="CHEBI:30616"/>
    </ligand>
</feature>
<feature type="binding site" evidence="1">
    <location>
        <position position="72"/>
    </location>
    <ligand>
        <name>Mg(2+)</name>
        <dbReference type="ChEBI" id="CHEBI:18420"/>
    </ligand>
</feature>
<feature type="binding site" evidence="1">
    <location>
        <position position="73"/>
    </location>
    <ligand>
        <name>ATP</name>
        <dbReference type="ChEBI" id="CHEBI:30616"/>
    </ligand>
</feature>
<feature type="binding site" evidence="1">
    <location>
        <begin position="134"/>
        <end position="136"/>
    </location>
    <ligand>
        <name>ATP</name>
        <dbReference type="ChEBI" id="CHEBI:30616"/>
    </ligand>
</feature>
<feature type="binding site" evidence="1">
    <location>
        <position position="177"/>
    </location>
    <ligand>
        <name>ATP</name>
        <dbReference type="ChEBI" id="CHEBI:30616"/>
    </ligand>
</feature>
<feature type="binding site" evidence="1">
    <location>
        <position position="187"/>
    </location>
    <ligand>
        <name>ATP</name>
        <dbReference type="ChEBI" id="CHEBI:30616"/>
    </ligand>
</feature>
<feature type="binding site" evidence="1">
    <location>
        <position position="224"/>
    </location>
    <ligand>
        <name>ATP</name>
        <dbReference type="ChEBI" id="CHEBI:30616"/>
    </ligand>
</feature>
<feature type="binding site" evidence="1">
    <location>
        <position position="316"/>
    </location>
    <ligand>
        <name>DNA</name>
        <dbReference type="ChEBI" id="CHEBI:16991"/>
    </ligand>
</feature>
<feature type="binding site" evidence="1">
    <location>
        <position position="321"/>
    </location>
    <ligand>
        <name>DNA</name>
        <dbReference type="ChEBI" id="CHEBI:16991"/>
    </ligand>
</feature>
<reference key="1">
    <citation type="journal article" date="2006" name="Proc. Natl. Acad. Sci. U.S.A.">
        <title>Comparative genomics of the lactic acid bacteria.</title>
        <authorList>
            <person name="Makarova K.S."/>
            <person name="Slesarev A."/>
            <person name="Wolf Y.I."/>
            <person name="Sorokin A."/>
            <person name="Mirkin B."/>
            <person name="Koonin E.V."/>
            <person name="Pavlov A."/>
            <person name="Pavlova N."/>
            <person name="Karamychev V."/>
            <person name="Polouchine N."/>
            <person name="Shakhova V."/>
            <person name="Grigoriev I."/>
            <person name="Lou Y."/>
            <person name="Rohksar D."/>
            <person name="Lucas S."/>
            <person name="Huang K."/>
            <person name="Goodstein D.M."/>
            <person name="Hawkins T."/>
            <person name="Plengvidhya V."/>
            <person name="Welker D."/>
            <person name="Hughes J."/>
            <person name="Goh Y."/>
            <person name="Benson A."/>
            <person name="Baldwin K."/>
            <person name="Lee J.-H."/>
            <person name="Diaz-Muniz I."/>
            <person name="Dosti B."/>
            <person name="Smeianov V."/>
            <person name="Wechter W."/>
            <person name="Barabote R."/>
            <person name="Lorca G."/>
            <person name="Altermann E."/>
            <person name="Barrangou R."/>
            <person name="Ganesan B."/>
            <person name="Xie Y."/>
            <person name="Rawsthorne H."/>
            <person name="Tamir D."/>
            <person name="Parker C."/>
            <person name="Breidt F."/>
            <person name="Broadbent J.R."/>
            <person name="Hutkins R."/>
            <person name="O'Sullivan D."/>
            <person name="Steele J."/>
            <person name="Unlu G."/>
            <person name="Saier M.H. Jr."/>
            <person name="Klaenhammer T."/>
            <person name="Richardson P."/>
            <person name="Kozyavkin S."/>
            <person name="Weimer B.C."/>
            <person name="Mills D.A."/>
        </authorList>
    </citation>
    <scope>NUCLEOTIDE SEQUENCE [LARGE SCALE GENOMIC DNA]</scope>
    <source>
        <strain>ATCC 334 / BCRC 17002 / CCUG 31169 / CIP 107868 / KCTC 3260 / NRRL B-441</strain>
    </source>
</reference>
<comment type="function">
    <text evidence="1">The RuvA-RuvB-RuvC complex processes Holliday junction (HJ) DNA during genetic recombination and DNA repair, while the RuvA-RuvB complex plays an important role in the rescue of blocked DNA replication forks via replication fork reversal (RFR). RuvA specifically binds to HJ cruciform DNA, conferring on it an open structure. The RuvB hexamer acts as an ATP-dependent pump, pulling dsDNA into and through the RuvAB complex. RuvB forms 2 homohexamers on either side of HJ DNA bound by 1 or 2 RuvA tetramers; 4 subunits per hexamer contact DNA at a time. Coordinated motions by a converter formed by DNA-disengaged RuvB subunits stimulates ATP hydrolysis and nucleotide exchange. Immobilization of the converter enables RuvB to convert the ATP-contained energy into a lever motion, pulling 2 nucleotides of DNA out of the RuvA tetramer per ATP hydrolyzed, thus driving DNA branch migration. The RuvB motors rotate together with the DNA substrate, which together with the progressing nucleotide cycle form the mechanistic basis for DNA recombination by continuous HJ branch migration. Branch migration allows RuvC to scan DNA until it finds its consensus sequence, where it cleaves and resolves cruciform DNA.</text>
</comment>
<comment type="catalytic activity">
    <reaction evidence="1">
        <text>ATP + H2O = ADP + phosphate + H(+)</text>
        <dbReference type="Rhea" id="RHEA:13065"/>
        <dbReference type="ChEBI" id="CHEBI:15377"/>
        <dbReference type="ChEBI" id="CHEBI:15378"/>
        <dbReference type="ChEBI" id="CHEBI:30616"/>
        <dbReference type="ChEBI" id="CHEBI:43474"/>
        <dbReference type="ChEBI" id="CHEBI:456216"/>
    </reaction>
</comment>
<comment type="subunit">
    <text evidence="1">Homohexamer. Forms an RuvA(8)-RuvB(12)-Holliday junction (HJ) complex. HJ DNA is sandwiched between 2 RuvA tetramers; dsDNA enters through RuvA and exits via RuvB. An RuvB hexamer assembles on each DNA strand where it exits the tetramer. Each RuvB hexamer is contacted by two RuvA subunits (via domain III) on 2 adjacent RuvB subunits; this complex drives branch migration. In the full resolvosome a probable DNA-RuvA(4)-RuvB(12)-RuvC(2) complex forms which resolves the HJ.</text>
</comment>
<comment type="subcellular location">
    <subcellularLocation>
        <location evidence="1">Cytoplasm</location>
    </subcellularLocation>
</comment>
<comment type="domain">
    <text evidence="1">Has 3 domains, the large (RuvB-L) and small ATPase (RuvB-S) domains and the C-terminal head (RuvB-H) domain. The head domain binds DNA, while the ATPase domains jointly bind ATP, ADP or are empty depending on the state of the subunit in the translocation cycle. During a single DNA translocation step the structure of each domain remains the same, but their relative positions change.</text>
</comment>
<comment type="similarity">
    <text evidence="1">Belongs to the RuvB family.</text>
</comment>
<accession>Q03B17</accession>
<protein>
    <recommendedName>
        <fullName evidence="1">Holliday junction branch migration complex subunit RuvB</fullName>
        <ecNumber evidence="1">3.6.4.-</ecNumber>
    </recommendedName>
</protein>
<proteinExistence type="inferred from homology"/>
<sequence length="338" mass="37498">MADADKDRLVSGDVDDSNEAQIEKSLRPRMLAQYIGQDRVKHQLEVYITAAKQREESLDHVLLYGPPGLGKTTLALVIANELGVNIRTTSGPAIEKPGDLVALLNELHPGDVLFIDEIHRLPKIVEEMLYSAMEDFYIDIVVGQGPTAHPVHFPLPPFTLIGATTRAGMLSAPLRDRFGISEHMAYYSADDLSEIVKRSATIFDMAIDAEGAHEIARRSRGTPRVANRLLKRIRDFAEVAGQSPVDIQMVDHALDQLQVDQQGLDQIDRKLLMFMIRDYEGGPVGLSTIAANIGEEMATIEEMYEPYLLQIGYLKRTPRGRMVTPAGFAHMGMSAEQH</sequence>